<organism>
    <name type="scientific">Staphylococcus haemolyticus (strain JCSC1435)</name>
    <dbReference type="NCBI Taxonomy" id="279808"/>
    <lineage>
        <taxon>Bacteria</taxon>
        <taxon>Bacillati</taxon>
        <taxon>Bacillota</taxon>
        <taxon>Bacilli</taxon>
        <taxon>Bacillales</taxon>
        <taxon>Staphylococcaceae</taxon>
        <taxon>Staphylococcus</taxon>
    </lineage>
</organism>
<protein>
    <recommendedName>
        <fullName evidence="1">Phosphate import ATP-binding protein PstB</fullName>
        <ecNumber evidence="1">7.3.2.1</ecNumber>
    </recommendedName>
    <alternativeName>
        <fullName evidence="1">ABC phosphate transporter</fullName>
    </alternativeName>
    <alternativeName>
        <fullName evidence="1">Phosphate-transporting ATPase</fullName>
    </alternativeName>
</protein>
<reference key="1">
    <citation type="journal article" date="2005" name="J. Bacteriol.">
        <title>Whole-genome sequencing of Staphylococcus haemolyticus uncovers the extreme plasticity of its genome and the evolution of human-colonizing staphylococcal species.</title>
        <authorList>
            <person name="Takeuchi F."/>
            <person name="Watanabe S."/>
            <person name="Baba T."/>
            <person name="Yuzawa H."/>
            <person name="Ito T."/>
            <person name="Morimoto Y."/>
            <person name="Kuroda M."/>
            <person name="Cui L."/>
            <person name="Takahashi M."/>
            <person name="Ankai A."/>
            <person name="Baba S."/>
            <person name="Fukui S."/>
            <person name="Lee J.C."/>
            <person name="Hiramatsu K."/>
        </authorList>
    </citation>
    <scope>NUCLEOTIDE SEQUENCE [LARGE SCALE GENOMIC DNA]</scope>
    <source>
        <strain>JCSC1435</strain>
    </source>
</reference>
<accession>Q4L691</accession>
<name>PSTB_STAHJ</name>
<comment type="function">
    <text evidence="1">Part of the ABC transporter complex PstSACB involved in phosphate import. Responsible for energy coupling to the transport system.</text>
</comment>
<comment type="catalytic activity">
    <reaction evidence="1">
        <text>phosphate(out) + ATP + H2O = ADP + 2 phosphate(in) + H(+)</text>
        <dbReference type="Rhea" id="RHEA:24440"/>
        <dbReference type="ChEBI" id="CHEBI:15377"/>
        <dbReference type="ChEBI" id="CHEBI:15378"/>
        <dbReference type="ChEBI" id="CHEBI:30616"/>
        <dbReference type="ChEBI" id="CHEBI:43474"/>
        <dbReference type="ChEBI" id="CHEBI:456216"/>
        <dbReference type="EC" id="7.3.2.1"/>
    </reaction>
</comment>
<comment type="subunit">
    <text evidence="1">The complex is composed of two ATP-binding proteins (PstB), two transmembrane proteins (PstC and PstA) and a solute-binding protein (PstS).</text>
</comment>
<comment type="subcellular location">
    <subcellularLocation>
        <location evidence="1">Cell membrane</location>
        <topology evidence="1">Peripheral membrane protein</topology>
    </subcellularLocation>
</comment>
<comment type="similarity">
    <text evidence="1">Belongs to the ABC transporter superfamily. Phosphate importer (TC 3.A.1.7) family.</text>
</comment>
<keyword id="KW-0067">ATP-binding</keyword>
<keyword id="KW-1003">Cell membrane</keyword>
<keyword id="KW-0472">Membrane</keyword>
<keyword id="KW-0547">Nucleotide-binding</keyword>
<keyword id="KW-0592">Phosphate transport</keyword>
<keyword id="KW-1278">Translocase</keyword>
<keyword id="KW-0813">Transport</keyword>
<evidence type="ECO:0000255" key="1">
    <source>
        <dbReference type="HAMAP-Rule" id="MF_01702"/>
    </source>
</evidence>
<evidence type="ECO:0000256" key="2">
    <source>
        <dbReference type="SAM" id="MobiDB-lite"/>
    </source>
</evidence>
<gene>
    <name evidence="1" type="primary">pstB</name>
    <name type="ordered locus">SH1525</name>
</gene>
<feature type="chain" id="PRO_0000272536" description="Phosphate import ATP-binding protein PstB">
    <location>
        <begin position="1"/>
        <end position="291"/>
    </location>
</feature>
<feature type="domain" description="ABC transporter" evidence="1">
    <location>
        <begin position="45"/>
        <end position="286"/>
    </location>
</feature>
<feature type="region of interest" description="Disordered" evidence="2">
    <location>
        <begin position="1"/>
        <end position="40"/>
    </location>
</feature>
<feature type="compositionally biased region" description="Basic and acidic residues" evidence="2">
    <location>
        <begin position="1"/>
        <end position="17"/>
    </location>
</feature>
<feature type="compositionally biased region" description="Polar residues" evidence="2">
    <location>
        <begin position="18"/>
        <end position="29"/>
    </location>
</feature>
<feature type="compositionally biased region" description="Basic and acidic residues" evidence="2">
    <location>
        <begin position="30"/>
        <end position="40"/>
    </location>
</feature>
<feature type="binding site" evidence="1">
    <location>
        <begin position="77"/>
        <end position="84"/>
    </location>
    <ligand>
        <name>ATP</name>
        <dbReference type="ChEBI" id="CHEBI:30616"/>
    </ligand>
</feature>
<proteinExistence type="inferred from homology"/>
<dbReference type="EC" id="7.3.2.1" evidence="1"/>
<dbReference type="EMBL" id="AP006716">
    <property type="protein sequence ID" value="BAE04834.1"/>
    <property type="molecule type" value="Genomic_DNA"/>
</dbReference>
<dbReference type="RefSeq" id="WP_011275817.1">
    <property type="nucleotide sequence ID" value="NC_007168.1"/>
</dbReference>
<dbReference type="SMR" id="Q4L691"/>
<dbReference type="GeneID" id="93780914"/>
<dbReference type="KEGG" id="sha:SH1525"/>
<dbReference type="eggNOG" id="COG1117">
    <property type="taxonomic scope" value="Bacteria"/>
</dbReference>
<dbReference type="HOGENOM" id="CLU_000604_1_22_9"/>
<dbReference type="OrthoDB" id="9802185at2"/>
<dbReference type="Proteomes" id="UP000000543">
    <property type="component" value="Chromosome"/>
</dbReference>
<dbReference type="GO" id="GO:0005886">
    <property type="term" value="C:plasma membrane"/>
    <property type="evidence" value="ECO:0007669"/>
    <property type="project" value="UniProtKB-SubCell"/>
</dbReference>
<dbReference type="GO" id="GO:0005524">
    <property type="term" value="F:ATP binding"/>
    <property type="evidence" value="ECO:0007669"/>
    <property type="project" value="UniProtKB-KW"/>
</dbReference>
<dbReference type="GO" id="GO:0016887">
    <property type="term" value="F:ATP hydrolysis activity"/>
    <property type="evidence" value="ECO:0007669"/>
    <property type="project" value="InterPro"/>
</dbReference>
<dbReference type="GO" id="GO:0015415">
    <property type="term" value="F:ATPase-coupled phosphate ion transmembrane transporter activity"/>
    <property type="evidence" value="ECO:0007669"/>
    <property type="project" value="UniProtKB-EC"/>
</dbReference>
<dbReference type="GO" id="GO:0035435">
    <property type="term" value="P:phosphate ion transmembrane transport"/>
    <property type="evidence" value="ECO:0007669"/>
    <property type="project" value="InterPro"/>
</dbReference>
<dbReference type="CDD" id="cd03260">
    <property type="entry name" value="ABC_PstB_phosphate_transporter"/>
    <property type="match status" value="1"/>
</dbReference>
<dbReference type="Gene3D" id="3.40.50.300">
    <property type="entry name" value="P-loop containing nucleotide triphosphate hydrolases"/>
    <property type="match status" value="1"/>
</dbReference>
<dbReference type="InterPro" id="IPR003593">
    <property type="entry name" value="AAA+_ATPase"/>
</dbReference>
<dbReference type="InterPro" id="IPR003439">
    <property type="entry name" value="ABC_transporter-like_ATP-bd"/>
</dbReference>
<dbReference type="InterPro" id="IPR017871">
    <property type="entry name" value="ABC_transporter-like_CS"/>
</dbReference>
<dbReference type="InterPro" id="IPR027417">
    <property type="entry name" value="P-loop_NTPase"/>
</dbReference>
<dbReference type="InterPro" id="IPR005670">
    <property type="entry name" value="PstB-like"/>
</dbReference>
<dbReference type="NCBIfam" id="TIGR00972">
    <property type="entry name" value="3a0107s01c2"/>
    <property type="match status" value="1"/>
</dbReference>
<dbReference type="PANTHER" id="PTHR43423">
    <property type="entry name" value="ABC TRANSPORTER I FAMILY MEMBER 17"/>
    <property type="match status" value="1"/>
</dbReference>
<dbReference type="PANTHER" id="PTHR43423:SF1">
    <property type="entry name" value="ABC TRANSPORTER I FAMILY MEMBER 17"/>
    <property type="match status" value="1"/>
</dbReference>
<dbReference type="Pfam" id="PF00005">
    <property type="entry name" value="ABC_tran"/>
    <property type="match status" value="1"/>
</dbReference>
<dbReference type="SMART" id="SM00382">
    <property type="entry name" value="AAA"/>
    <property type="match status" value="1"/>
</dbReference>
<dbReference type="SUPFAM" id="SSF52540">
    <property type="entry name" value="P-loop containing nucleoside triphosphate hydrolases"/>
    <property type="match status" value="1"/>
</dbReference>
<dbReference type="PROSITE" id="PS00211">
    <property type="entry name" value="ABC_TRANSPORTER_1"/>
    <property type="match status" value="1"/>
</dbReference>
<dbReference type="PROSITE" id="PS50893">
    <property type="entry name" value="ABC_TRANSPORTER_2"/>
    <property type="match status" value="1"/>
</dbReference>
<dbReference type="PROSITE" id="PS51238">
    <property type="entry name" value="PSTB"/>
    <property type="match status" value="1"/>
</dbReference>
<sequence length="291" mass="32860">MANTNVKEKELAKHTDQSQESISTVVSSNEVKHNKESDSNKKVVYSTQNLDLWYGDTHALQNINLDILENNVTAIIGPSGCGKSTYIKTLNRMVELVPSVKTAGKILYRDQNIFDENYSKEKLRTNVGMVFQQPNPFPKSIYDNITYGPKTHGIKDKKLLDEIVEKSLRGAAIWDELKDRLHTNAYGLSGGQQQRVCIARCLAIEPDVILMDEPTSALDPISTLRVEELVQELKENYSIIMVTHNMQQAARVSDKTAFFLNGYVNEYDDTDKIFSNPSDKQTEDYISGRFG</sequence>